<comment type="function">
    <molecule>Envelope glycoprotein gp160</molecule>
    <text evidence="1">Oligomerizes in the host endoplasmic reticulum into predominantly trimers. In a second time, gp160 transits in the host Golgi, where glycosylation is completed. The precursor is then proteolytically cleaved in the trans-Golgi and thereby activated by cellular furin or furin-like proteases to produce gp120 and gp41.</text>
</comment>
<comment type="function">
    <molecule>Surface protein gp120</molecule>
    <text evidence="1">Attaches the virus to the host lymphoid cell by binding to the primary receptor CD4. This interaction induces a structural rearrangement creating a high affinity binding site for a chemokine coreceptor like CXCR4 and/or CCR5. Acts as a ligand for CD209/DC-SIGN and CLEC4M/DC-SIGNR, which are respectively found on dendritic cells (DCs), and on endothelial cells of liver sinusoids and lymph node sinuses. These interactions allow capture of viral particles at mucosal surfaces by these cells and subsequent transmission to permissive cells. HIV subverts the migration properties of dendritic cells to gain access to CD4+ T-cells in lymph nodes. Virus transmission to permissive T-cells occurs either in trans (without DCs infection, through viral capture and transmission), or in cis (following DCs productive infection, through the usual CD4-gp120 interaction), thereby inducing a robust infection. In trans infection, bound virions remain infectious over days and it is proposed that they are not degraded, but protected in non-lysosomal acidic organelles within the DCs close to the cell membrane thus contributing to the viral infectious potential during DCs' migration from the periphery to the lymphoid tissues. On arrival at lymphoid tissues, intact virions recycle back to DCs' cell surface allowing virus transmission to CD4+ T-cells.</text>
</comment>
<comment type="function">
    <molecule>Transmembrane protein gp41</molecule>
    <text evidence="1">Acts as a class I viral fusion protein. Under the current model, the protein has at least 3 conformational states: pre-fusion native state, pre-hairpin intermediate state, and post-fusion hairpin state. During fusion of viral and target intracellular membranes, the coiled coil regions (heptad repeats) assume a trimer-of-hairpins structure, positioning the fusion peptide in close proximity to the C-terminal region of the ectodomain. The formation of this structure appears to drive apposition and subsequent fusion of viral and target cell membranes. Complete fusion occurs in host cell endosomes and is dynamin-dependent, however some lipid transfer might occur at the plasma membrane. The virus undergoes clathrin-dependent internalization long before endosomal fusion, thus minimizing the surface exposure of conserved viral epitopes during fusion and reducing the efficacy of inhibitors targeting these epitopes. Membranes fusion leads to delivery of the nucleocapsid into the cytoplasm.</text>
</comment>
<comment type="subunit">
    <molecule>Surface protein gp120</molecule>
    <text evidence="1">The mature envelope protein (Env) consists of a homotrimer of non-covalently associated gp120-gp41 heterodimers. The resulting complex protrudes from the virus surface as a spike. There seems to be as few as 10 spikes on the average virion. Interacts with host CD4, CCR5 and CXCR4. Gp120 also interacts with the C-type lectins CD209/DC-SIGN and CLEC4M/DC-SIGNR (collectively referred to as DC-SIGN(R)). Gp120 and gp41 interact with GalCer. Gp120 interacts with host ITGA4/ITGB7 complex; on CD4+ T-cells, this interaction results in rapid activation of integrin ITGAL/LFA-1, which facilitates efficient cell-to-cell spreading of HIV-1. Gp120 interacts with cell-associated heparan sulfate; this interaction increases virus infectivity on permissive cells and may be involved in infection of CD4- cells.</text>
</comment>
<comment type="subunit">
    <molecule>Transmembrane protein gp41</molecule>
    <text evidence="1">The mature envelope protein (Env) consists of a homotrimer of non-covalently associated gp120-gp41 heterodimers. The resulting complex protrudes from the virus surface as a spike. There seems to be as few as 10 spikes on the average virion.</text>
</comment>
<comment type="subcellular location">
    <molecule>Surface protein gp120</molecule>
    <subcellularLocation>
        <location evidence="1">Virion membrane</location>
        <topology evidence="1">Peripheral membrane protein</topology>
    </subcellularLocation>
    <subcellularLocation>
        <location evidence="1">Host cell membrane</location>
        <topology evidence="1">Peripheral membrane protein</topology>
    </subcellularLocation>
    <subcellularLocation>
        <location evidence="1">Host endosome membrane</location>
        <topology evidence="1">Single-pass type I membrane protein</topology>
    </subcellularLocation>
    <text evidence="1">The surface protein is not anchored to the viral envelope, but associates with the extravirion surface through its binding to TM. It is probably concentrated at the site of budding and incorporated into the virions possibly by contacts between the cytoplasmic tail of Env and the N-terminus of Gag.</text>
</comment>
<comment type="subcellular location">
    <molecule>Transmembrane protein gp41</molecule>
    <subcellularLocation>
        <location evidence="1">Virion membrane</location>
        <topology evidence="1">Single-pass type I membrane protein</topology>
    </subcellularLocation>
    <subcellularLocation>
        <location evidence="1">Host cell membrane</location>
        <topology evidence="1">Single-pass type I membrane protein</topology>
    </subcellularLocation>
    <subcellularLocation>
        <location evidence="1">Host endosome membrane</location>
        <topology evidence="1">Single-pass type I membrane protein</topology>
    </subcellularLocation>
    <text evidence="1">It is probably concentrated at the site of budding and incorporated into the virions possibly by contacts between the cytoplasmic tail of Env and the N-terminus of Gag.</text>
</comment>
<comment type="domain">
    <text evidence="1">Some of the most genetically diverse regions of the viral genome are present in Env. They are called variable regions 1 through 5 (V1 through V5). Coreceptor usage of gp120 is determined mainly by the primary structure of the third variable region (V3) in the outer domain of gp120. The sequence of V3 determines which coreceptor, CCR5 and/or CXCR4 (corresponding to R5/macrophage, X4/T cell and R5X4/T cell and macrophage tropism), is used to trigger the fusion potential of the Env complex, and hence which cells the virus can infect. Binding to CCR5 involves a region adjacent in addition to V3.</text>
</comment>
<comment type="domain">
    <text evidence="1">The membrane proximal external region (MPER) present in gp41 is a tryptophan-rich region recognized by the antibodies 2F5, Z13, and 4E10. MPER seems to play a role in fusion.</text>
</comment>
<comment type="domain">
    <text evidence="1">The 17 amino acids long immunosuppressive region is present in many retroviral envelope proteins. Synthetic peptides derived from this relatively conserved sequence inhibit immune function in vitro and in vivo.</text>
</comment>
<comment type="domain">
    <text evidence="1">The YXXL motif is involved in determining the exact site of viral release at the surface of infected mononuclear cells and promotes endocytosis. YXXL and di-leucine endocytosis motifs interact directly or indirectly with the clathrin adapter complexes, opperate independently, and their activities are not additive.</text>
</comment>
<comment type="domain">
    <text evidence="1">The CD4-binding region is targeted by the antibody b12.</text>
</comment>
<comment type="PTM">
    <text evidence="1">Highly glycosylated by host. The high number of glycan on the protein is reffered to as 'glycan shield' because it contributes to hide protein sequence from adaptive immune system.</text>
</comment>
<comment type="PTM">
    <text evidence="1">Palmitoylation of the transmembrane protein and of Env polyprotein (prior to its proteolytic cleavage) is essential for their association with host cell membrane lipid rafts. Palmitoylation is therefore required for envelope trafficking to classical lipid rafts, but not for viral replication.</text>
</comment>
<comment type="PTM">
    <text evidence="1">Specific enzymatic cleavages in vivo yield mature proteins. Envelope glycoproteins are synthesized as an inactive precursor that is heavily N-glycosylated and processed likely by host cell furin in the Golgi to yield the mature SU and TM proteins. The cleavage site between SU and TM requires the minimal sequence [KR]-X-[KR]-R. About 2 of the 9 disulfide bonds of gp41 are reduced by P4HB/PDI, following binding to CD4 receptor.</text>
</comment>
<comment type="miscellaneous">
    <text evidence="1">Inhibitors targeting HIV-1 viral envelope proteins are used as antiretroviral drugs. Attachment of virions to the cell surface via non-specific interactions and CD4 binding can be blocked by inhibitors that include cyanovirin-N, cyclotriazadisulfonamide analogs, PRO 2000, TNX 355 and PRO 542. In addition, BMS 806 can block CD4-induced conformational changes. Env interactions with the coreceptor molecules can be targeted by CCR5 antagonists including SCH-D, maraviroc (UK 427857) and aplaviroc (GW 873140), and the CXCR4 antagonist AMD 070. Fusion of viral and cellular membranes can be inhibited by peptides such as enfuvirtide and tifuvirtide (T 1249). Resistance to inhibitors associated with mutations in Env are observed. Most of the time, single mutations confer only a modest reduction in drug susceptibility. Combination of several mutations is usually required to develop a high-level drug resistance.</text>
</comment>
<comment type="miscellaneous">
    <text evidence="1">HIV-1 lineages are divided in three main groups, M (for Major), O (for Outlier), and N (for New, or Non-M, Non-O). The vast majority of strains found worldwide belong to the group M. Group O seems to be endemic to and largely confined to Cameroon and neighboring countries in West Central Africa, where these viruses represent a small minority of HIV-1 strains. The group N is represented by a limited number of isolates from Cameroonian persons. The group M is further subdivided in 9 clades or subtypes (A to D, F to H, J and K).</text>
</comment>
<comment type="similarity">
    <text evidence="1">Belongs to the HIV-1 env protein family.</text>
</comment>
<comment type="online information" name="hivdb">
    <link uri="https://hivdb.stanford.edu"/>
    <text>HIV drug resistance database</text>
</comment>
<comment type="online information" name="HIV drug resistance mutations">
    <link uri="https://www.iasusa.org/hiv-drug-resistance/hiv-drug-resistance-mutations/"/>
</comment>
<dbReference type="EMBL" id="M65024">
    <property type="protein sequence ID" value="AAA45072.1"/>
    <property type="molecule type" value="Genomic_RNA"/>
</dbReference>
<dbReference type="PDB" id="8FAD">
    <property type="method" value="EM"/>
    <property type="resolution" value="4.00 A"/>
    <property type="chains" value="B/D/F=511-648"/>
</dbReference>
<dbReference type="PDBsum" id="8FAD"/>
<dbReference type="EMDB" id="EMD-28953"/>
<dbReference type="SMR" id="P19550"/>
<dbReference type="BindingDB" id="P19550"/>
<dbReference type="ChEMBL" id="CHEMBL2396504"/>
<dbReference type="GlyCosmos" id="P19550">
    <property type="glycosylation" value="25 sites, No reported glycans"/>
</dbReference>
<dbReference type="ABCD" id="P19550">
    <property type="antibodies" value="7 sequenced antibodies"/>
</dbReference>
<dbReference type="Reactome" id="R-HSA-5621480">
    <property type="pathway name" value="Dectin-2 family"/>
</dbReference>
<dbReference type="GO" id="GO:0044175">
    <property type="term" value="C:host cell endosome membrane"/>
    <property type="evidence" value="ECO:0007669"/>
    <property type="project" value="UniProtKB-SubCell"/>
</dbReference>
<dbReference type="GO" id="GO:0020002">
    <property type="term" value="C:host cell plasma membrane"/>
    <property type="evidence" value="ECO:0007669"/>
    <property type="project" value="UniProtKB-SubCell"/>
</dbReference>
<dbReference type="GO" id="GO:0016020">
    <property type="term" value="C:membrane"/>
    <property type="evidence" value="ECO:0007669"/>
    <property type="project" value="UniProtKB-UniRule"/>
</dbReference>
<dbReference type="GO" id="GO:0019031">
    <property type="term" value="C:viral envelope"/>
    <property type="evidence" value="ECO:0007669"/>
    <property type="project" value="UniProtKB-KW"/>
</dbReference>
<dbReference type="GO" id="GO:0055036">
    <property type="term" value="C:virion membrane"/>
    <property type="evidence" value="ECO:0007669"/>
    <property type="project" value="UniProtKB-SubCell"/>
</dbReference>
<dbReference type="GO" id="GO:0005198">
    <property type="term" value="F:structural molecule activity"/>
    <property type="evidence" value="ECO:0007669"/>
    <property type="project" value="UniProtKB-UniRule"/>
</dbReference>
<dbReference type="GO" id="GO:0075512">
    <property type="term" value="P:clathrin-dependent endocytosis of virus by host cell"/>
    <property type="evidence" value="ECO:0007669"/>
    <property type="project" value="UniProtKB-UniRule"/>
</dbReference>
<dbReference type="GO" id="GO:0039654">
    <property type="term" value="P:fusion of virus membrane with host endosome membrane"/>
    <property type="evidence" value="ECO:0007669"/>
    <property type="project" value="UniProtKB-UniRule"/>
</dbReference>
<dbReference type="GO" id="GO:0019064">
    <property type="term" value="P:fusion of virus membrane with host plasma membrane"/>
    <property type="evidence" value="ECO:0007669"/>
    <property type="project" value="UniProtKB-UniRule"/>
</dbReference>
<dbReference type="GO" id="GO:1903908">
    <property type="term" value="P:positive regulation of plasma membrane raft polarization"/>
    <property type="evidence" value="ECO:0007669"/>
    <property type="project" value="UniProtKB-UniRule"/>
</dbReference>
<dbReference type="GO" id="GO:1903911">
    <property type="term" value="P:positive regulation of receptor clustering"/>
    <property type="evidence" value="ECO:0007669"/>
    <property type="project" value="UniProtKB-UniRule"/>
</dbReference>
<dbReference type="GO" id="GO:0019082">
    <property type="term" value="P:viral protein processing"/>
    <property type="evidence" value="ECO:0007669"/>
    <property type="project" value="UniProtKB-UniRule"/>
</dbReference>
<dbReference type="GO" id="GO:0019062">
    <property type="term" value="P:virion attachment to host cell"/>
    <property type="evidence" value="ECO:0007669"/>
    <property type="project" value="UniProtKB-UniRule"/>
</dbReference>
<dbReference type="CDD" id="cd09909">
    <property type="entry name" value="HIV-1-like_HR1-HR2"/>
    <property type="match status" value="1"/>
</dbReference>
<dbReference type="FunFam" id="1.10.287.210:FF:000001">
    <property type="entry name" value="Envelope glycoprotein gp160"/>
    <property type="match status" value="1"/>
</dbReference>
<dbReference type="FunFam" id="1.20.5.490:FF:000001">
    <property type="entry name" value="Envelope glycoprotein gp160"/>
    <property type="match status" value="1"/>
</dbReference>
<dbReference type="FunFam" id="2.170.40.20:FF:000001">
    <property type="entry name" value="Envelope glycoprotein gp160"/>
    <property type="match status" value="1"/>
</dbReference>
<dbReference type="FunFam" id="2.170.40.20:FF:000003">
    <property type="entry name" value="Envelope glycoprotein gp160"/>
    <property type="match status" value="1"/>
</dbReference>
<dbReference type="Gene3D" id="1.10.287.210">
    <property type="match status" value="1"/>
</dbReference>
<dbReference type="Gene3D" id="2.170.40.20">
    <property type="entry name" value="Human immunodeficiency virus 1, Gp160, envelope glycoprotein"/>
    <property type="match status" value="2"/>
</dbReference>
<dbReference type="Gene3D" id="1.20.5.490">
    <property type="entry name" value="Single helix bin"/>
    <property type="match status" value="1"/>
</dbReference>
<dbReference type="HAMAP" id="MF_04083">
    <property type="entry name" value="HIV_ENV"/>
    <property type="match status" value="1"/>
</dbReference>
<dbReference type="InterPro" id="IPR036377">
    <property type="entry name" value="Gp120_core_sf"/>
</dbReference>
<dbReference type="InterPro" id="IPR037527">
    <property type="entry name" value="Gp160"/>
</dbReference>
<dbReference type="InterPro" id="IPR000328">
    <property type="entry name" value="GP41-like"/>
</dbReference>
<dbReference type="InterPro" id="IPR000777">
    <property type="entry name" value="HIV1_Gp120"/>
</dbReference>
<dbReference type="Pfam" id="PF00516">
    <property type="entry name" value="GP120"/>
    <property type="match status" value="2"/>
</dbReference>
<dbReference type="Pfam" id="PF00517">
    <property type="entry name" value="GP41"/>
    <property type="match status" value="1"/>
</dbReference>
<dbReference type="SUPFAM" id="SSF56502">
    <property type="entry name" value="gp120 core"/>
    <property type="match status" value="2"/>
</dbReference>
<dbReference type="SUPFAM" id="SSF58069">
    <property type="entry name" value="Virus ectodomain"/>
    <property type="match status" value="1"/>
</dbReference>
<name>ENV_HV1S1</name>
<feature type="signal peptide" evidence="1">
    <location>
        <begin position="1"/>
        <end position="31"/>
    </location>
</feature>
<feature type="chain" id="PRO_0000239479" description="Envelope glycoprotein gp160" evidence="1">
    <location>
        <begin position="32"/>
        <end position="847"/>
    </location>
</feature>
<feature type="chain" id="PRO_0000038398" description="Surface protein gp120" evidence="1">
    <location>
        <begin position="32"/>
        <end position="502"/>
    </location>
</feature>
<feature type="chain" id="PRO_0000038399" description="Transmembrane protein gp41" evidence="1">
    <location>
        <begin position="503"/>
        <end position="847"/>
    </location>
</feature>
<feature type="topological domain" description="Extracellular" evidence="1">
    <location>
        <begin position="32"/>
        <end position="675"/>
    </location>
</feature>
<feature type="transmembrane region" description="Helical" evidence="1">
    <location>
        <begin position="676"/>
        <end position="696"/>
    </location>
</feature>
<feature type="topological domain" description="Cytoplasmic" evidence="1">
    <location>
        <begin position="697"/>
        <end position="847"/>
    </location>
</feature>
<feature type="region of interest" description="V1" evidence="1">
    <location>
        <begin position="130"/>
        <end position="154"/>
    </location>
</feature>
<feature type="region of interest" description="V2" evidence="1">
    <location>
        <begin position="155"/>
        <end position="194"/>
    </location>
</feature>
<feature type="region of interest" description="V3" evidence="1">
    <location>
        <begin position="294"/>
        <end position="327"/>
    </location>
</feature>
<feature type="region of interest" description="CD4-binding loop" evidence="1">
    <location>
        <begin position="360"/>
        <end position="370"/>
    </location>
</feature>
<feature type="region of interest" description="V4" evidence="1">
    <location>
        <begin position="381"/>
        <end position="408"/>
    </location>
</feature>
<feature type="region of interest" description="V5">
    <location>
        <begin position="451"/>
        <end position="462"/>
    </location>
</feature>
<feature type="region of interest" description="V5" evidence="1">
    <location>
        <begin position="453"/>
        <end position="462"/>
    </location>
</feature>
<feature type="region of interest" description="Fusion peptide" evidence="1">
    <location>
        <begin position="503"/>
        <end position="523"/>
    </location>
</feature>
<feature type="region of interest" description="Immunosuppression" evidence="1">
    <location>
        <begin position="565"/>
        <end position="583"/>
    </location>
</feature>
<feature type="region of interest" description="MPER; binding to GalCer" evidence="1">
    <location>
        <begin position="653"/>
        <end position="674"/>
    </location>
</feature>
<feature type="region of interest" description="Disordered" evidence="2">
    <location>
        <begin position="710"/>
        <end position="736"/>
    </location>
</feature>
<feature type="coiled-coil region" evidence="1">
    <location>
        <begin position="624"/>
        <end position="658"/>
    </location>
</feature>
<feature type="short sequence motif" description="YXXL motif; contains endocytosis signal" evidence="1">
    <location>
        <begin position="703"/>
        <end position="706"/>
    </location>
</feature>
<feature type="short sequence motif" description="Di-leucine internalization motif" evidence="1">
    <location>
        <begin position="846"/>
        <end position="847"/>
    </location>
</feature>
<feature type="site" description="Cleavage; by host furin" evidence="1">
    <location>
        <begin position="502"/>
        <end position="503"/>
    </location>
</feature>
<feature type="lipid moiety-binding region" description="S-palmitoyl cysteine; by host" evidence="1">
    <location>
        <position position="755"/>
    </location>
</feature>
<feature type="glycosylation site" description="N-linked (GlcNAc...) asparagine; by host" evidence="1">
    <location>
        <position position="87"/>
    </location>
</feature>
<feature type="glycosylation site" description="N-linked (GlcNAc...) asparagine; by host" evidence="1">
    <location>
        <position position="135"/>
    </location>
</feature>
<feature type="glycosylation site" description="N-linked (GlcNAc...) asparagine; by host" evidence="1">
    <location>
        <position position="154"/>
    </location>
</feature>
<feature type="glycosylation site" description="N-linked (GlcNAc...) asparagine; by host" evidence="1">
    <location>
        <position position="186"/>
    </location>
</feature>
<feature type="glycosylation site" description="N-linked (GlcNAc...) asparagine; by host" evidence="1">
    <location>
        <position position="195"/>
    </location>
</feature>
<feature type="glycosylation site" description="N-linked (GlcNAc...) asparagine; by host" evidence="1">
    <location>
        <position position="232"/>
    </location>
</feature>
<feature type="glycosylation site" description="N-linked (GlcNAc...) asparagine; by host" evidence="1">
    <location>
        <position position="239"/>
    </location>
</feature>
<feature type="glycosylation site" description="N-linked (GlcNAc...) asparagine; by host" evidence="1">
    <location>
        <position position="260"/>
    </location>
</feature>
<feature type="glycosylation site" description="N-linked (GlcNAc...) asparagine; by host" evidence="1">
    <location>
        <position position="274"/>
    </location>
</feature>
<feature type="glycosylation site" description="N-linked (GlcNAc...) asparagine; by host" evidence="1">
    <location>
        <position position="293"/>
    </location>
</feature>
<feature type="glycosylation site" description="N-linked (GlcNAc...) asparagine; by host" evidence="1">
    <location>
        <position position="299"/>
    </location>
</feature>
<feature type="glycosylation site" description="N-linked (GlcNAc...) asparagine; by host" evidence="1">
    <location>
        <position position="329"/>
    </location>
</feature>
<feature type="glycosylation site" description="N-linked (GlcNAc...) asparagine; by host" evidence="1">
    <location>
        <position position="336"/>
    </location>
</feature>
<feature type="glycosylation site" description="N-linked (GlcNAc...) asparagine; by host" evidence="1">
    <location>
        <position position="352"/>
    </location>
</feature>
<feature type="glycosylation site" description="N-linked (GlcNAc...) asparagine; by host" evidence="1">
    <location>
        <position position="382"/>
    </location>
</feature>
<feature type="glycosylation site" description="N-linked (GlcNAc...) asparagine; by host" evidence="1">
    <location>
        <position position="388"/>
    </location>
</feature>
<feature type="glycosylation site" description="N-linked (GlcNAc...) asparagine; by host" evidence="1">
    <location>
        <position position="392"/>
    </location>
</feature>
<feature type="glycosylation site" description="N-linked (GlcNAc...) asparagine; by host" evidence="1">
    <location>
        <position position="398"/>
    </location>
</feature>
<feature type="glycosylation site" description="N-linked (GlcNAc...) asparagine; by host" evidence="1">
    <location>
        <position position="401"/>
    </location>
</feature>
<feature type="glycosylation site" description="N-linked (GlcNAc...) asparagine; by host" evidence="1">
    <location>
        <position position="438"/>
    </location>
</feature>
<feature type="glycosylation site" description="N-linked (GlcNAc...) asparagine; by host" evidence="1">
    <location>
        <position position="454"/>
    </location>
</feature>
<feature type="glycosylation site" description="N-linked (GlcNAc...) asparagine; by host" evidence="1">
    <location>
        <position position="602"/>
    </location>
</feature>
<feature type="glycosylation site" description="N-linked (GlcNAc...) asparagine; by host" evidence="1">
    <location>
        <position position="607"/>
    </location>
</feature>
<feature type="glycosylation site" description="N-linked (GlcNAc...) asparagine; by host" evidence="1">
    <location>
        <position position="616"/>
    </location>
</feature>
<feature type="glycosylation site" description="N-linked (GlcNAc...) asparagine; by host" evidence="1">
    <location>
        <position position="628"/>
    </location>
</feature>
<feature type="disulfide bond" evidence="1">
    <location>
        <begin position="53"/>
        <end position="73"/>
    </location>
</feature>
<feature type="disulfide bond" evidence="1">
    <location>
        <begin position="118"/>
        <end position="203"/>
    </location>
</feature>
<feature type="disulfide bond" evidence="1">
    <location>
        <begin position="125"/>
        <end position="194"/>
    </location>
</feature>
<feature type="disulfide bond" evidence="1">
    <location>
        <begin position="130"/>
        <end position="155"/>
    </location>
</feature>
<feature type="disulfide bond" evidence="1">
    <location>
        <begin position="216"/>
        <end position="245"/>
    </location>
</feature>
<feature type="disulfide bond" evidence="1">
    <location>
        <begin position="226"/>
        <end position="237"/>
    </location>
</feature>
<feature type="disulfide bond" evidence="1">
    <location>
        <begin position="294"/>
        <end position="328"/>
    </location>
</feature>
<feature type="disulfide bond" evidence="1">
    <location>
        <begin position="374"/>
        <end position="435"/>
    </location>
</feature>
<feature type="disulfide bond" evidence="1">
    <location>
        <begin position="381"/>
        <end position="408"/>
    </location>
</feature>
<feature type="disulfide bond" evidence="1">
    <location>
        <begin position="589"/>
        <end position="595"/>
    </location>
</feature>
<reference key="1">
    <citation type="journal article" date="1990" name="J. Virol.">
        <title>Viral determinants of human immunodeficiency virus type 1 T-cell or macrophage tropism, cytopathogenicity, and CD4 antigen modulation.</title>
        <authorList>
            <person name="Cheng-Mayer C."/>
            <person name="Quiroga M."/>
            <person name="Tung J.W."/>
            <person name="Dina D."/>
            <person name="Levy J.A."/>
        </authorList>
    </citation>
    <scope>NUCLEOTIDE SEQUENCE [GENOMIC RNA]</scope>
</reference>
<reference key="2">
    <citation type="journal article" date="2003" name="APMIS">
        <title>Pathogens target DC-SIGN to influence their fate DC-SIGN functions as a pathogen receptor with broad specificity.</title>
        <authorList>
            <person name="Geijtenbeek T.B."/>
            <person name="van Kooyk Y."/>
        </authorList>
    </citation>
    <scope>REVIEW</scope>
</reference>
<reference key="3">
    <citation type="journal article" date="2003" name="Biochim. Biophys. Acta">
        <title>The HIV Env-mediated fusion reaction.</title>
        <authorList>
            <person name="Gallo S.A."/>
            <person name="Finnegan C.M."/>
            <person name="Viard M."/>
            <person name="Raviv Y."/>
            <person name="Dimitrov A."/>
            <person name="Rawat S.S."/>
            <person name="Puri A."/>
            <person name="Durell S."/>
            <person name="Blumenthal R."/>
        </authorList>
    </citation>
    <scope>REVIEW</scope>
</reference>
<reference key="4">
    <citation type="journal article" date="2005" name="Cell Death Differ.">
        <title>Mechanisms of apoptosis induction by the HIV-1 envelope.</title>
        <authorList>
            <person name="Perfettini J.-L."/>
            <person name="Castedo M."/>
            <person name="Roumier T."/>
            <person name="Andreau K."/>
            <person name="Nardacci R."/>
            <person name="Piacentini M."/>
            <person name="Kroemer G."/>
        </authorList>
    </citation>
    <scope>REVIEW</scope>
</reference>
<reference key="5">
    <citation type="journal article" date="2005" name="AIDS Res. Hum. Retroviruses">
        <title>V3: HIV's switch-hitter.</title>
        <authorList>
            <person name="Hartley O."/>
            <person name="Klasse P.J."/>
            <person name="Sattentau Q.J."/>
            <person name="Moore J.P."/>
        </authorList>
    </citation>
    <scope>REVIEW</scope>
</reference>
<reference key="6">
    <citation type="journal article" date="2005" name="Drugs">
        <title>Emerging drug targets for antiretroviral therapy.</title>
        <authorList>
            <person name="Reeves J.D."/>
            <person name="Piefer A.J."/>
        </authorList>
    </citation>
    <scope>REVIEW</scope>
</reference>
<reference key="7">
    <citation type="journal article" date="2006" name="EMBO J.">
        <title>HIV and the chemokine system: 10 years later.</title>
        <authorList>
            <person name="Lusso P."/>
        </authorList>
    </citation>
    <scope>REVIEW</scope>
</reference>
<accession>P19550</accession>
<gene>
    <name evidence="1" type="primary">env</name>
</gene>
<sequence length="847" mass="96136">MRVKGIRKNYQHLWRGGTLLLGMLMICSAVEKLWVTVYYGVPVWKEATTTLFCASDAKAYDTEVHNVWATHACVPTDPNPQEIVLENVTENFNMWKNNMVEQMHEDIISLWDQSLKPCVKLTPLCVTLHCTNLKNATNTKSSNWKEMDRGEIKNCSFKVTTSIRNKMQKEYALFYKLDVVPIDNDNTSYKLINCNTSVITQACPKVSFEPIPIHYCAPAGFAILKCNDKKFNGSGPCTNVSTVQCTHGIRPVVSTQLLLNGSLAEEGVVIRSENFTDNAKTIIVQLKESVEINCTRPNNNTRKSITIGPGRAFYATGDIIGDIRQAHCNISGEKWNNTLKQIVTKLQAQFGNKTIVFKQSSGGDPEIVMHSFNCGGEFFYCNSTQLFNSTWNNTIGPNNTNGTITLPCRIKQIINRWQEVGKAMYAPPIRGQIRCSSNITGLLLTRDGGKEISNTTEIFRPGGGDMRDNWRSELYKYKVVKIEPLGVAPTKAKRRVVQREKRAVTLGAMFLGFLGAAGSTMGARSLTLTVQARQLLSGIVQQQNNLLRAIEAQQHLLQLTVWGIKQLQARVLAVERYLKDQQLLGIWGCSGKLICTTAVPWNASWSNKSLDQIWNNMTWMEWEREIDNYTNLIYTLIEESQNQQEKNEQELLELDKWASLWNWFDISKWLWYIKIFIMIVGGLVGLRIVFTVLSIVNRVRQGYSPLSFQTRFPAPRGPDRPEGIEEEGGERDRDRSSPLVHGLLALIWDDLRSLCLFSYHRLRDLILIAARIVELLGRRGWEALKYWGNLLQYWIQELKNSAVSLFDAIAIAVAEGTDRIIEVAQRIGRAFLHIPRRIRQGFERALL</sequence>
<organism>
    <name type="scientific">Human immunodeficiency virus type 1 group M subtype B (isolate SF162)</name>
    <name type="common">HIV-1</name>
    <dbReference type="NCBI Taxonomy" id="11691"/>
    <lineage>
        <taxon>Viruses</taxon>
        <taxon>Riboviria</taxon>
        <taxon>Pararnavirae</taxon>
        <taxon>Artverviricota</taxon>
        <taxon>Revtraviricetes</taxon>
        <taxon>Ortervirales</taxon>
        <taxon>Retroviridae</taxon>
        <taxon>Orthoretrovirinae</taxon>
        <taxon>Lentivirus</taxon>
        <taxon>Human immunodeficiency virus type 1</taxon>
    </lineage>
</organism>
<evidence type="ECO:0000255" key="1">
    <source>
        <dbReference type="HAMAP-Rule" id="MF_04083"/>
    </source>
</evidence>
<evidence type="ECO:0000256" key="2">
    <source>
        <dbReference type="SAM" id="MobiDB-lite"/>
    </source>
</evidence>
<keyword id="KW-0002">3D-structure</keyword>
<keyword id="KW-0014">AIDS</keyword>
<keyword id="KW-0053">Apoptosis</keyword>
<keyword id="KW-1165">Clathrin-mediated endocytosis of virus by host</keyword>
<keyword id="KW-0165">Cleavage on pair of basic residues</keyword>
<keyword id="KW-0175">Coiled coil</keyword>
<keyword id="KW-1015">Disulfide bond</keyword>
<keyword id="KW-1170">Fusion of virus membrane with host endosomal membrane</keyword>
<keyword id="KW-1168">Fusion of virus membrane with host membrane</keyword>
<keyword id="KW-0325">Glycoprotein</keyword>
<keyword id="KW-1032">Host cell membrane</keyword>
<keyword id="KW-1039">Host endosome</keyword>
<keyword id="KW-1043">Host membrane</keyword>
<keyword id="KW-0945">Host-virus interaction</keyword>
<keyword id="KW-0449">Lipoprotein</keyword>
<keyword id="KW-0472">Membrane</keyword>
<keyword id="KW-0564">Palmitate</keyword>
<keyword id="KW-0732">Signal</keyword>
<keyword id="KW-0812">Transmembrane</keyword>
<keyword id="KW-1133">Transmembrane helix</keyword>
<keyword id="KW-1161">Viral attachment to host cell</keyword>
<keyword id="KW-0261">Viral envelope protein</keyword>
<keyword id="KW-0899">Viral immunoevasion</keyword>
<keyword id="KW-1162">Viral penetration into host cytoplasm</keyword>
<keyword id="KW-0946">Virion</keyword>
<keyword id="KW-1164">Virus endocytosis by host</keyword>
<keyword id="KW-1160">Virus entry into host cell</keyword>
<proteinExistence type="evidence at protein level"/>
<organismHost>
    <name type="scientific">Homo sapiens</name>
    <name type="common">Human</name>
    <dbReference type="NCBI Taxonomy" id="9606"/>
</organismHost>
<protein>
    <recommendedName>
        <fullName evidence="1">Envelope glycoprotein gp160</fullName>
    </recommendedName>
    <alternativeName>
        <fullName evidence="1">Env polyprotein</fullName>
    </alternativeName>
    <component>
        <recommendedName>
            <fullName evidence="1">Surface protein gp120</fullName>
            <shortName evidence="1">SU</shortName>
        </recommendedName>
        <alternativeName>
            <fullName evidence="1">Glycoprotein 120</fullName>
            <shortName evidence="1">gp120</shortName>
        </alternativeName>
    </component>
    <component>
        <recommendedName>
            <fullName evidence="1">Transmembrane protein gp41</fullName>
            <shortName evidence="1">TM</shortName>
        </recommendedName>
        <alternativeName>
            <fullName evidence="1">Glycoprotein 41</fullName>
            <shortName evidence="1">gp41</shortName>
        </alternativeName>
    </component>
</protein>